<name>YDEO_ECO57</name>
<keyword id="KW-0010">Activator</keyword>
<keyword id="KW-0238">DNA-binding</keyword>
<keyword id="KW-1185">Reference proteome</keyword>
<keyword id="KW-0804">Transcription</keyword>
<keyword id="KW-0805">Transcription regulation</keyword>
<organism>
    <name type="scientific">Escherichia coli O157:H7</name>
    <dbReference type="NCBI Taxonomy" id="83334"/>
    <lineage>
        <taxon>Bacteria</taxon>
        <taxon>Pseudomonadati</taxon>
        <taxon>Pseudomonadota</taxon>
        <taxon>Gammaproteobacteria</taxon>
        <taxon>Enterobacterales</taxon>
        <taxon>Enterobacteriaceae</taxon>
        <taxon>Escherichia</taxon>
    </lineage>
</organism>
<comment type="function">
    <text evidence="1">Induces the expression of gadE and mdtEF. Could also regulate the expression of other genes involved in acid resistance (By similarity).</text>
</comment>
<comment type="induction">
    <text evidence="1">Induced by EvgA.</text>
</comment>
<dbReference type="EMBL" id="AE005174">
    <property type="protein sequence ID" value="AAG56269.1"/>
    <property type="molecule type" value="Genomic_DNA"/>
</dbReference>
<dbReference type="EMBL" id="BA000007">
    <property type="protein sequence ID" value="BAB35527.1"/>
    <property type="molecule type" value="Genomic_DNA"/>
</dbReference>
<dbReference type="PIR" id="A85726">
    <property type="entry name" value="A85726"/>
</dbReference>
<dbReference type="PIR" id="H90891">
    <property type="entry name" value="H90891"/>
</dbReference>
<dbReference type="SMR" id="Q8X4Z9"/>
<dbReference type="STRING" id="155864.Z2209"/>
<dbReference type="KEGG" id="ece:Z2209"/>
<dbReference type="KEGG" id="ecs:ECs_2104"/>
<dbReference type="PATRIC" id="fig|386585.9.peg.2210"/>
<dbReference type="eggNOG" id="COG2207">
    <property type="taxonomic scope" value="Bacteria"/>
</dbReference>
<dbReference type="HOGENOM" id="CLU_000445_81_4_6"/>
<dbReference type="OMA" id="HMGMNTG"/>
<dbReference type="Proteomes" id="UP000000558">
    <property type="component" value="Chromosome"/>
</dbReference>
<dbReference type="Proteomes" id="UP000002519">
    <property type="component" value="Chromosome"/>
</dbReference>
<dbReference type="GO" id="GO:0003700">
    <property type="term" value="F:DNA-binding transcription factor activity"/>
    <property type="evidence" value="ECO:0007669"/>
    <property type="project" value="InterPro"/>
</dbReference>
<dbReference type="GO" id="GO:0043565">
    <property type="term" value="F:sequence-specific DNA binding"/>
    <property type="evidence" value="ECO:0007669"/>
    <property type="project" value="InterPro"/>
</dbReference>
<dbReference type="FunFam" id="1.10.10.60:FF:000346">
    <property type="entry name" value="HTH-type transcriptional regulator ydeO"/>
    <property type="match status" value="1"/>
</dbReference>
<dbReference type="Gene3D" id="1.10.10.60">
    <property type="entry name" value="Homeodomain-like"/>
    <property type="match status" value="1"/>
</dbReference>
<dbReference type="InterPro" id="IPR009057">
    <property type="entry name" value="Homeodomain-like_sf"/>
</dbReference>
<dbReference type="InterPro" id="IPR018060">
    <property type="entry name" value="HTH_AraC"/>
</dbReference>
<dbReference type="InterPro" id="IPR018062">
    <property type="entry name" value="HTH_AraC-typ_CS"/>
</dbReference>
<dbReference type="InterPro" id="IPR020449">
    <property type="entry name" value="Tscrpt_reg_AraC-type_HTH"/>
</dbReference>
<dbReference type="NCBIfam" id="NF007407">
    <property type="entry name" value="PRK09940.1"/>
    <property type="match status" value="1"/>
</dbReference>
<dbReference type="PANTHER" id="PTHR43280">
    <property type="entry name" value="ARAC-FAMILY TRANSCRIPTIONAL REGULATOR"/>
    <property type="match status" value="1"/>
</dbReference>
<dbReference type="PANTHER" id="PTHR43280:SF33">
    <property type="entry name" value="HTH-TYPE TRANSCRIPTIONAL REGULATOR APPY-RELATED"/>
    <property type="match status" value="1"/>
</dbReference>
<dbReference type="Pfam" id="PF12833">
    <property type="entry name" value="HTH_18"/>
    <property type="match status" value="1"/>
</dbReference>
<dbReference type="PRINTS" id="PR00032">
    <property type="entry name" value="HTHARAC"/>
</dbReference>
<dbReference type="SMART" id="SM00342">
    <property type="entry name" value="HTH_ARAC"/>
    <property type="match status" value="1"/>
</dbReference>
<dbReference type="SUPFAM" id="SSF46689">
    <property type="entry name" value="Homeodomain-like"/>
    <property type="match status" value="1"/>
</dbReference>
<dbReference type="PROSITE" id="PS00041">
    <property type="entry name" value="HTH_ARAC_FAMILY_1"/>
    <property type="match status" value="1"/>
</dbReference>
<dbReference type="PROSITE" id="PS01124">
    <property type="entry name" value="HTH_ARAC_FAMILY_2"/>
    <property type="match status" value="1"/>
</dbReference>
<proteinExistence type="inferred from homology"/>
<sequence>MSLVCSVIFIHHAFNANILDKDYAFSDGEILMVDNAVRTHFEPYERHFKEIGFNENTIKKYLQCTNIQTVTMPVPAKFLRASNVPTGLLNEMIAYLNSEERNHHNFSELLLFSCLSIFATCKGFITLLTNGVLSVSGKVRNIVNMKLAHPWKLKDICDCLYISESLLKKKLKQEQTTFSQILLDARMQHAKNLIRVEGSVNKIAEQCGYASTSYFIYAFRKHFGNSPKRVSKEYRCQRHTGMNTGNTMNALAI</sequence>
<protein>
    <recommendedName>
        <fullName>HTH-type transcriptional regulator YdeO</fullName>
    </recommendedName>
</protein>
<accession>Q8X4Z9</accession>
<accession>Q7AE11</accession>
<evidence type="ECO:0000250" key="1"/>
<evidence type="ECO:0000255" key="2">
    <source>
        <dbReference type="PROSITE-ProRule" id="PRU00593"/>
    </source>
</evidence>
<feature type="chain" id="PRO_0000194608" description="HTH-type transcriptional regulator YdeO">
    <location>
        <begin position="1"/>
        <end position="253"/>
    </location>
</feature>
<feature type="domain" description="HTH araC/xylS-type" evidence="2">
    <location>
        <begin position="137"/>
        <end position="233"/>
    </location>
</feature>
<feature type="DNA-binding region" description="H-T-H motif" evidence="2">
    <location>
        <begin position="154"/>
        <end position="175"/>
    </location>
</feature>
<feature type="DNA-binding region" description="H-T-H motif" evidence="2">
    <location>
        <begin position="200"/>
        <end position="223"/>
    </location>
</feature>
<gene>
    <name type="ordered locus">Z2209</name>
    <name type="ordered locus">ECs2104</name>
</gene>
<reference key="1">
    <citation type="journal article" date="2001" name="Nature">
        <title>Genome sequence of enterohaemorrhagic Escherichia coli O157:H7.</title>
        <authorList>
            <person name="Perna N.T."/>
            <person name="Plunkett G. III"/>
            <person name="Burland V."/>
            <person name="Mau B."/>
            <person name="Glasner J.D."/>
            <person name="Rose D.J."/>
            <person name="Mayhew G.F."/>
            <person name="Evans P.S."/>
            <person name="Gregor J."/>
            <person name="Kirkpatrick H.A."/>
            <person name="Posfai G."/>
            <person name="Hackett J."/>
            <person name="Klink S."/>
            <person name="Boutin A."/>
            <person name="Shao Y."/>
            <person name="Miller L."/>
            <person name="Grotbeck E.J."/>
            <person name="Davis N.W."/>
            <person name="Lim A."/>
            <person name="Dimalanta E.T."/>
            <person name="Potamousis K."/>
            <person name="Apodaca J."/>
            <person name="Anantharaman T.S."/>
            <person name="Lin J."/>
            <person name="Yen G."/>
            <person name="Schwartz D.C."/>
            <person name="Welch R.A."/>
            <person name="Blattner F.R."/>
        </authorList>
    </citation>
    <scope>NUCLEOTIDE SEQUENCE [LARGE SCALE GENOMIC DNA]</scope>
    <source>
        <strain>O157:H7 / EDL933 / ATCC 700927 / EHEC</strain>
    </source>
</reference>
<reference key="2">
    <citation type="journal article" date="2001" name="DNA Res.">
        <title>Complete genome sequence of enterohemorrhagic Escherichia coli O157:H7 and genomic comparison with a laboratory strain K-12.</title>
        <authorList>
            <person name="Hayashi T."/>
            <person name="Makino K."/>
            <person name="Ohnishi M."/>
            <person name="Kurokawa K."/>
            <person name="Ishii K."/>
            <person name="Yokoyama K."/>
            <person name="Han C.-G."/>
            <person name="Ohtsubo E."/>
            <person name="Nakayama K."/>
            <person name="Murata T."/>
            <person name="Tanaka M."/>
            <person name="Tobe T."/>
            <person name="Iida T."/>
            <person name="Takami H."/>
            <person name="Honda T."/>
            <person name="Sasakawa C."/>
            <person name="Ogasawara N."/>
            <person name="Yasunaga T."/>
            <person name="Kuhara S."/>
            <person name="Shiba T."/>
            <person name="Hattori M."/>
            <person name="Shinagawa H."/>
        </authorList>
    </citation>
    <scope>NUCLEOTIDE SEQUENCE [LARGE SCALE GENOMIC DNA]</scope>
    <source>
        <strain>O157:H7 / Sakai / RIMD 0509952 / EHEC</strain>
    </source>
</reference>